<feature type="chain" id="PRO_0000062751" description="Cell division protein FtsA">
    <location>
        <begin position="1"/>
        <end position="470"/>
    </location>
</feature>
<feature type="region of interest" description="Disordered" evidence="2">
    <location>
        <begin position="416"/>
        <end position="470"/>
    </location>
</feature>
<feature type="compositionally biased region" description="Acidic residues" evidence="2">
    <location>
        <begin position="425"/>
        <end position="434"/>
    </location>
</feature>
<feature type="compositionally biased region" description="Basic and acidic residues" evidence="2">
    <location>
        <begin position="436"/>
        <end position="461"/>
    </location>
</feature>
<reference key="1">
    <citation type="journal article" date="1997" name="J. Bacteriol.">
        <title>Identification and characterization of cell wall-cell division gene clusters in pathogenic Gram-positive cocci.</title>
        <authorList>
            <person name="Pucci M.J."/>
            <person name="Thanassi J.A."/>
            <person name="Discotto L.F."/>
            <person name="Kessler R.E."/>
            <person name="Dougherty T.J."/>
        </authorList>
    </citation>
    <scope>NUCLEOTIDE SEQUENCE [GENOMIC DNA]</scope>
</reference>
<reference key="2">
    <citation type="book" date="2006" name="Gram positive pathogens, 2nd edition">
        <title>The Staphylococcus aureus NCTC 8325 genome.</title>
        <editorList>
            <person name="Fischetti V."/>
            <person name="Novick R."/>
            <person name="Ferretti J."/>
            <person name="Portnoy D."/>
            <person name="Rood J."/>
        </editorList>
        <authorList>
            <person name="Gillaspy A.F."/>
            <person name="Worrell V."/>
            <person name="Orvis J."/>
            <person name="Roe B.A."/>
            <person name="Dyer D.W."/>
            <person name="Iandolo J.J."/>
        </authorList>
    </citation>
    <scope>NUCLEOTIDE SEQUENCE [LARGE SCALE GENOMIC DNA]</scope>
    <source>
        <strain>NCTC 8325 / PS 47</strain>
    </source>
</reference>
<reference key="3">
    <citation type="journal article" date="2000" name="Biochem. Biophys. Res. Commun.">
        <title>A conserved residue at the extreme C-terminus of FtsZ is critical for the FtsA-FtsZ interaction in Staphylococcus aureus.</title>
        <authorList>
            <person name="Yan K."/>
            <person name="Pearce K.H."/>
            <person name="Payne D.J."/>
        </authorList>
    </citation>
    <scope>INTERACTION WITH FTSZ</scope>
    <source>
        <strain>WCUH29 / NCIMB 40771</strain>
    </source>
</reference>
<comment type="function">
    <text evidence="1">Cell division protein that is involved in the assembly of the Z ring. May serve as a membrane anchor for the Z ring.</text>
</comment>
<comment type="subunit">
    <text evidence="1 3">Self-interacts (By similarity). Interacts with FtsZ (PubMed:10753635).</text>
</comment>
<comment type="subcellular location">
    <subcellularLocation>
        <location evidence="1">Cell membrane</location>
        <topology evidence="1">Peripheral membrane protein</topology>
        <orientation evidence="1">Cytoplasmic side</orientation>
    </subcellularLocation>
    <text evidence="1">Localizes to the Z ring in an FtsZ-dependent manner. Targeted to the membrane through a conserved C-terminal amphipathic helix.</text>
</comment>
<comment type="similarity">
    <text evidence="1">Belongs to the FtsA/MreB family.</text>
</comment>
<comment type="sequence caution" evidence="4">
    <conflict type="frameshift">
        <sequence resource="EMBL-CDS" id="AAC45628"/>
    </conflict>
</comment>
<dbReference type="EMBL" id="U94706">
    <property type="protein sequence ID" value="AAC45628.1"/>
    <property type="status" value="ALT_FRAME"/>
    <property type="molecule type" value="Genomic_DNA"/>
</dbReference>
<dbReference type="EMBL" id="CP000253">
    <property type="protein sequence ID" value="ABD30259.1"/>
    <property type="molecule type" value="Genomic_DNA"/>
</dbReference>
<dbReference type="RefSeq" id="WP_000391031.1">
    <property type="nucleotide sequence ID" value="NZ_LS483365.1"/>
</dbReference>
<dbReference type="RefSeq" id="YP_499691.1">
    <property type="nucleotide sequence ID" value="NC_007795.1"/>
</dbReference>
<dbReference type="SMR" id="O07325"/>
<dbReference type="STRING" id="93061.SAOUHSC_01149"/>
<dbReference type="PaxDb" id="1280-SAXN108_1183"/>
<dbReference type="GeneID" id="3920709"/>
<dbReference type="KEGG" id="sao:SAOUHSC_01149"/>
<dbReference type="PATRIC" id="fig|93061.5.peg.1054"/>
<dbReference type="eggNOG" id="COG0849">
    <property type="taxonomic scope" value="Bacteria"/>
</dbReference>
<dbReference type="HOGENOM" id="CLU_037850_1_0_9"/>
<dbReference type="OrthoDB" id="9768127at2"/>
<dbReference type="PRO" id="PR:O07325"/>
<dbReference type="Proteomes" id="UP000008816">
    <property type="component" value="Chromosome"/>
</dbReference>
<dbReference type="GO" id="GO:0032153">
    <property type="term" value="C:cell division site"/>
    <property type="evidence" value="ECO:0000318"/>
    <property type="project" value="GO_Central"/>
</dbReference>
<dbReference type="GO" id="GO:0009898">
    <property type="term" value="C:cytoplasmic side of plasma membrane"/>
    <property type="evidence" value="ECO:0000318"/>
    <property type="project" value="GO_Central"/>
</dbReference>
<dbReference type="GO" id="GO:0051301">
    <property type="term" value="P:cell division"/>
    <property type="evidence" value="ECO:0000318"/>
    <property type="project" value="GO_Central"/>
</dbReference>
<dbReference type="GO" id="GO:0043093">
    <property type="term" value="P:FtsZ-dependent cytokinesis"/>
    <property type="evidence" value="ECO:0007669"/>
    <property type="project" value="UniProtKB-UniRule"/>
</dbReference>
<dbReference type="CDD" id="cd24048">
    <property type="entry name" value="ASKHA_NBD_FtsA"/>
    <property type="match status" value="1"/>
</dbReference>
<dbReference type="FunFam" id="3.30.420.40:FF:000196">
    <property type="entry name" value="Cell division protein FtsA"/>
    <property type="match status" value="1"/>
</dbReference>
<dbReference type="Gene3D" id="3.30.1490.110">
    <property type="match status" value="1"/>
</dbReference>
<dbReference type="Gene3D" id="3.30.420.40">
    <property type="match status" value="2"/>
</dbReference>
<dbReference type="HAMAP" id="MF_02033">
    <property type="entry name" value="FtsA"/>
    <property type="match status" value="1"/>
</dbReference>
<dbReference type="InterPro" id="IPR043129">
    <property type="entry name" value="ATPase_NBD"/>
</dbReference>
<dbReference type="InterPro" id="IPR020823">
    <property type="entry name" value="Cell_div_FtsA"/>
</dbReference>
<dbReference type="InterPro" id="IPR050696">
    <property type="entry name" value="FtsA/MreB"/>
</dbReference>
<dbReference type="InterPro" id="IPR003494">
    <property type="entry name" value="SHS2_FtsA"/>
</dbReference>
<dbReference type="NCBIfam" id="TIGR01174">
    <property type="entry name" value="ftsA"/>
    <property type="match status" value="1"/>
</dbReference>
<dbReference type="PANTHER" id="PTHR32432:SF4">
    <property type="entry name" value="CELL DIVISION PROTEIN FTSA"/>
    <property type="match status" value="1"/>
</dbReference>
<dbReference type="PANTHER" id="PTHR32432">
    <property type="entry name" value="CELL DIVISION PROTEIN FTSA-RELATED"/>
    <property type="match status" value="1"/>
</dbReference>
<dbReference type="Pfam" id="PF14450">
    <property type="entry name" value="FtsA"/>
    <property type="match status" value="1"/>
</dbReference>
<dbReference type="Pfam" id="PF02491">
    <property type="entry name" value="SHS2_FTSA"/>
    <property type="match status" value="1"/>
</dbReference>
<dbReference type="PIRSF" id="PIRSF003101">
    <property type="entry name" value="FtsA"/>
    <property type="match status" value="1"/>
</dbReference>
<dbReference type="SMART" id="SM00842">
    <property type="entry name" value="FtsA"/>
    <property type="match status" value="1"/>
</dbReference>
<dbReference type="SUPFAM" id="SSF53067">
    <property type="entry name" value="Actin-like ATPase domain"/>
    <property type="match status" value="2"/>
</dbReference>
<keyword id="KW-0131">Cell cycle</keyword>
<keyword id="KW-0132">Cell division</keyword>
<keyword id="KW-1003">Cell membrane</keyword>
<keyword id="KW-0472">Membrane</keyword>
<keyword id="KW-1185">Reference proteome</keyword>
<organism>
    <name type="scientific">Staphylococcus aureus (strain NCTC 8325 / PS 47)</name>
    <dbReference type="NCBI Taxonomy" id="93061"/>
    <lineage>
        <taxon>Bacteria</taxon>
        <taxon>Bacillati</taxon>
        <taxon>Bacillota</taxon>
        <taxon>Bacilli</taxon>
        <taxon>Bacillales</taxon>
        <taxon>Staphylococcaceae</taxon>
        <taxon>Staphylococcus</taxon>
    </lineage>
</organism>
<name>FTSA_STAA8</name>
<protein>
    <recommendedName>
        <fullName evidence="1">Cell division protein FtsA</fullName>
    </recommendedName>
</protein>
<gene>
    <name evidence="1" type="primary">ftsA</name>
    <name type="ordered locus">SAOUHSC_01149</name>
</gene>
<accession>O07325</accession>
<accession>Q2FZ90</accession>
<evidence type="ECO:0000255" key="1">
    <source>
        <dbReference type="HAMAP-Rule" id="MF_02033"/>
    </source>
</evidence>
<evidence type="ECO:0000256" key="2">
    <source>
        <dbReference type="SAM" id="MobiDB-lite"/>
    </source>
</evidence>
<evidence type="ECO:0000269" key="3">
    <source>
    </source>
</evidence>
<evidence type="ECO:0000305" key="4"/>
<proteinExistence type="evidence at protein level"/>
<sequence>MEEHYYVSIDIGSSSVKTIVGEKFHNGINVIGTGQTYTSGIKNGLIDDFDIARQAIKDTIKKASIASGVDIKEVFLKLPIIGTEVYDESNEIDFYEDTEINGSHIEKVLEGIREKNDVQETEVINVFPIRFIVDKENEVSDPKELIARHSLKVEAGVIAIQKSILINMIKCVEACGVDVLDVYSDAYNYGSILTATEKELGACVIDIGEDVTQVAFYERGELVDADSIEMAGRDITDDIAQGLNTSYETAEKVKHQYGHAFYDSASDQDIFTVEQVDSDETVQYTQKDLSDFIEARVEEIFFEVFDVLQDLGLTKVNGGFIVTGGSANLLGVKELLSDMVSEKVRIHTPSQMGIRKPEFSSAISTISSSIAFDELLDYVTINYHDNEETEEDVIDVKDKDNESKLGGFDWFKRKTNKKDTHENEVESTDEEIYQSEDNHQEHKQNHEHVQDKDKDKEESKFKKLMKSLFE</sequence>